<organism>
    <name type="scientific">Staphylococcus aureus (strain NCTC 8325 / PS 47)</name>
    <dbReference type="NCBI Taxonomy" id="93061"/>
    <lineage>
        <taxon>Bacteria</taxon>
        <taxon>Bacillati</taxon>
        <taxon>Bacillota</taxon>
        <taxon>Bacilli</taxon>
        <taxon>Bacillales</taxon>
        <taxon>Staphylococcaceae</taxon>
        <taxon>Staphylococcus</taxon>
    </lineage>
</organism>
<sequence length="68" mass="7237">MSQEILNVEGMSCGHCKSAVESALNNIDGVTSADVNLENGQVSVQYDDSKVAVSQMKDAIEDQGYDVV</sequence>
<reference key="1">
    <citation type="book" date="2006" name="Gram positive pathogens, 2nd edition">
        <title>The Staphylococcus aureus NCTC 8325 genome.</title>
        <editorList>
            <person name="Fischetti V."/>
            <person name="Novick R."/>
            <person name="Ferretti J."/>
            <person name="Portnoy D."/>
            <person name="Rood J."/>
        </editorList>
        <authorList>
            <person name="Gillaspy A.F."/>
            <person name="Worrell V."/>
            <person name="Orvis J."/>
            <person name="Roe B.A."/>
            <person name="Dyer D.W."/>
            <person name="Iandolo J.J."/>
        </authorList>
    </citation>
    <scope>NUCLEOTIDE SEQUENCE [LARGE SCALE GENOMIC DNA]</scope>
    <source>
        <strain>NCTC 8325 / PS 47</strain>
    </source>
</reference>
<reference key="2">
    <citation type="journal article" date="2007" name="Microbiology">
        <title>Molecular characterization of the copper transport system in Staphylococcus aureus.</title>
        <authorList>
            <person name="Sitthisak S."/>
            <person name="Knutsson L."/>
            <person name="Webb J.W."/>
            <person name="Jayaswal R.K."/>
        </authorList>
    </citation>
    <scope>FUNCTION IN COPPER TRANSPORT</scope>
    <scope>DEVELOPMENTAL STAGE</scope>
    <scope>INDUCTION</scope>
</reference>
<accession>Q2FV63</accession>
<feature type="chain" id="PRO_0000351280" description="Copper chaperone CopZ">
    <location>
        <begin position="1"/>
        <end position="68"/>
    </location>
</feature>
<feature type="domain" description="HMA" evidence="2">
    <location>
        <begin position="2"/>
        <end position="68"/>
    </location>
</feature>
<feature type="binding site" evidence="2">
    <location>
        <position position="13"/>
    </location>
    <ligand>
        <name>Cu cation</name>
        <dbReference type="ChEBI" id="CHEBI:23378"/>
    </ligand>
</feature>
<feature type="binding site" evidence="2">
    <location>
        <position position="16"/>
    </location>
    <ligand>
        <name>Cu cation</name>
        <dbReference type="ChEBI" id="CHEBI:23378"/>
    </ligand>
</feature>
<feature type="strand" evidence="4">
    <location>
        <begin position="3"/>
        <end position="9"/>
    </location>
</feature>
<feature type="helix" evidence="4">
    <location>
        <begin position="14"/>
        <end position="25"/>
    </location>
</feature>
<feature type="strand" evidence="4">
    <location>
        <begin position="30"/>
        <end position="35"/>
    </location>
</feature>
<feature type="turn" evidence="4">
    <location>
        <begin position="37"/>
        <end position="39"/>
    </location>
</feature>
<feature type="strand" evidence="4">
    <location>
        <begin position="41"/>
        <end position="46"/>
    </location>
</feature>
<feature type="turn" evidence="4">
    <location>
        <begin position="48"/>
        <end position="50"/>
    </location>
</feature>
<feature type="helix" evidence="4">
    <location>
        <begin position="53"/>
        <end position="62"/>
    </location>
</feature>
<proteinExistence type="evidence at protein level"/>
<keyword id="KW-0002">3D-structure</keyword>
<keyword id="KW-0143">Chaperone</keyword>
<keyword id="KW-0186">Copper</keyword>
<keyword id="KW-0963">Cytoplasm</keyword>
<keyword id="KW-0479">Metal-binding</keyword>
<keyword id="KW-1185">Reference proteome</keyword>
<protein>
    <recommendedName>
        <fullName>Copper chaperone CopZ</fullName>
    </recommendedName>
</protein>
<gene>
    <name type="primary">copZ</name>
    <name type="ordered locus">SAOUHSC_02874</name>
</gene>
<comment type="function">
    <text evidence="1 3">Chaperone that serves for the intracellular sequestration and transport of Cu(+). Delivers Cu(+) to the copper-exporting P-type ATPase A (CopA) (By similarity).</text>
</comment>
<comment type="subcellular location">
    <subcellularLocation>
        <location evidence="1">Cytoplasm</location>
    </subcellularLocation>
</comment>
<comment type="developmental stage">
    <text evidence="3">Highest expression during the exponential growth phase.</text>
</comment>
<comment type="induction">
    <text evidence="3">Induced by copper and, to some extent, by ferric and lead ions.</text>
</comment>
<dbReference type="EMBL" id="CP000253">
    <property type="protein sequence ID" value="ABD31872.1"/>
    <property type="molecule type" value="Genomic_DNA"/>
</dbReference>
<dbReference type="RefSeq" id="WP_000076661.1">
    <property type="nucleotide sequence ID" value="NZ_LS483365.1"/>
</dbReference>
<dbReference type="RefSeq" id="YP_501329.1">
    <property type="nucleotide sequence ID" value="NC_007795.1"/>
</dbReference>
<dbReference type="PDB" id="6FF2">
    <property type="method" value="X-ray"/>
    <property type="resolution" value="1.30 A"/>
    <property type="chains" value="A/B=1-68"/>
</dbReference>
<dbReference type="PDBsum" id="6FF2"/>
<dbReference type="SMR" id="Q2FV63"/>
<dbReference type="STRING" id="93061.SAOUHSC_02874"/>
<dbReference type="PaxDb" id="1280-SAXN108_2809"/>
<dbReference type="GeneID" id="3921545"/>
<dbReference type="KEGG" id="sao:SAOUHSC_02874"/>
<dbReference type="PATRIC" id="fig|93061.5.peg.2598"/>
<dbReference type="eggNOG" id="COG2608">
    <property type="taxonomic scope" value="Bacteria"/>
</dbReference>
<dbReference type="HOGENOM" id="CLU_134973_10_4_9"/>
<dbReference type="OrthoDB" id="9813965at2"/>
<dbReference type="PRO" id="PR:Q2FV63"/>
<dbReference type="Proteomes" id="UP000008816">
    <property type="component" value="Chromosome"/>
</dbReference>
<dbReference type="GO" id="GO:0005737">
    <property type="term" value="C:cytoplasm"/>
    <property type="evidence" value="ECO:0007669"/>
    <property type="project" value="UniProtKB-SubCell"/>
</dbReference>
<dbReference type="GO" id="GO:0005507">
    <property type="term" value="F:copper ion binding"/>
    <property type="evidence" value="ECO:0007669"/>
    <property type="project" value="InterPro"/>
</dbReference>
<dbReference type="CDD" id="cd00371">
    <property type="entry name" value="HMA"/>
    <property type="match status" value="1"/>
</dbReference>
<dbReference type="FunFam" id="3.30.70.100:FF:000005">
    <property type="entry name" value="Copper-exporting P-type ATPase A"/>
    <property type="match status" value="1"/>
</dbReference>
<dbReference type="Gene3D" id="3.30.70.100">
    <property type="match status" value="1"/>
</dbReference>
<dbReference type="InterPro" id="IPR049740">
    <property type="entry name" value="CopZ"/>
</dbReference>
<dbReference type="InterPro" id="IPR017969">
    <property type="entry name" value="Heavy-metal-associated_CS"/>
</dbReference>
<dbReference type="InterPro" id="IPR006122">
    <property type="entry name" value="HMA_Cu_ion-bd"/>
</dbReference>
<dbReference type="InterPro" id="IPR006121">
    <property type="entry name" value="HMA_dom"/>
</dbReference>
<dbReference type="InterPro" id="IPR036163">
    <property type="entry name" value="HMA_dom_sf"/>
</dbReference>
<dbReference type="InterPro" id="IPR001802">
    <property type="entry name" value="MerP/CopZ"/>
</dbReference>
<dbReference type="NCBIfam" id="NF033795">
    <property type="entry name" value="chaper_CopZ_Bs"/>
    <property type="match status" value="1"/>
</dbReference>
<dbReference type="NCBIfam" id="TIGR00003">
    <property type="entry name" value="copper ion binding protein"/>
    <property type="match status" value="1"/>
</dbReference>
<dbReference type="PANTHER" id="PTHR46594">
    <property type="entry name" value="P-TYPE CATION-TRANSPORTING ATPASE"/>
    <property type="match status" value="1"/>
</dbReference>
<dbReference type="PANTHER" id="PTHR46594:SF4">
    <property type="entry name" value="P-TYPE CATION-TRANSPORTING ATPASE"/>
    <property type="match status" value="1"/>
</dbReference>
<dbReference type="Pfam" id="PF00403">
    <property type="entry name" value="HMA"/>
    <property type="match status" value="1"/>
</dbReference>
<dbReference type="PRINTS" id="PR00946">
    <property type="entry name" value="HGSCAVENGER"/>
</dbReference>
<dbReference type="SUPFAM" id="SSF55008">
    <property type="entry name" value="HMA, heavy metal-associated domain"/>
    <property type="match status" value="1"/>
</dbReference>
<dbReference type="PROSITE" id="PS01047">
    <property type="entry name" value="HMA_1"/>
    <property type="match status" value="1"/>
</dbReference>
<dbReference type="PROSITE" id="PS50846">
    <property type="entry name" value="HMA_2"/>
    <property type="match status" value="1"/>
</dbReference>
<evidence type="ECO:0000250" key="1"/>
<evidence type="ECO:0000255" key="2">
    <source>
        <dbReference type="PROSITE-ProRule" id="PRU00280"/>
    </source>
</evidence>
<evidence type="ECO:0000269" key="3">
    <source>
    </source>
</evidence>
<evidence type="ECO:0007829" key="4">
    <source>
        <dbReference type="PDB" id="6FF2"/>
    </source>
</evidence>
<name>COPZ_STAA8</name>